<gene>
    <name evidence="1" type="primary">rpiA</name>
    <name type="ordered locus">MJ1603</name>
</gene>
<reference key="1">
    <citation type="journal article" date="1996" name="Science">
        <title>Complete genome sequence of the methanogenic archaeon, Methanococcus jannaschii.</title>
        <authorList>
            <person name="Bult C.J."/>
            <person name="White O."/>
            <person name="Olsen G.J."/>
            <person name="Zhou L."/>
            <person name="Fleischmann R.D."/>
            <person name="Sutton G.G."/>
            <person name="Blake J.A."/>
            <person name="FitzGerald L.M."/>
            <person name="Clayton R.A."/>
            <person name="Gocayne J.D."/>
            <person name="Kerlavage A.R."/>
            <person name="Dougherty B.A."/>
            <person name="Tomb J.-F."/>
            <person name="Adams M.D."/>
            <person name="Reich C.I."/>
            <person name="Overbeek R."/>
            <person name="Kirkness E.F."/>
            <person name="Weinstock K.G."/>
            <person name="Merrick J.M."/>
            <person name="Glodek A."/>
            <person name="Scott J.L."/>
            <person name="Geoghagen N.S.M."/>
            <person name="Weidman J.F."/>
            <person name="Fuhrmann J.L."/>
            <person name="Nguyen D."/>
            <person name="Utterback T.R."/>
            <person name="Kelley J.M."/>
            <person name="Peterson J.D."/>
            <person name="Sadow P.W."/>
            <person name="Hanna M.C."/>
            <person name="Cotton M.D."/>
            <person name="Roberts K.M."/>
            <person name="Hurst M.A."/>
            <person name="Kaine B.P."/>
            <person name="Borodovsky M."/>
            <person name="Klenk H.-P."/>
            <person name="Fraser C.M."/>
            <person name="Smith H.O."/>
            <person name="Woese C.R."/>
            <person name="Venter J.C."/>
        </authorList>
    </citation>
    <scope>NUCLEOTIDE SEQUENCE [LARGE SCALE GENOMIC DNA]</scope>
    <source>
        <strain>ATCC 43067 / DSM 2661 / JAL-1 / JCM 10045 / NBRC 100440</strain>
    </source>
</reference>
<reference key="2">
    <citation type="journal article" date="2005" name="J. Bacteriol.">
        <title>Ribose-5-phosphate biosynthesis in Methanocaldococcus jannaschii occurs in the absence of a pentose-phosphate pathway.</title>
        <authorList>
            <person name="Grochowski L.L."/>
            <person name="Xu H."/>
            <person name="White R.H."/>
        </authorList>
    </citation>
    <scope>PATHWAY</scope>
</reference>
<reference key="3">
    <citation type="journal article" date="2009" name="Acta Crystallogr. F">
        <title>The structure of an archaeal ribose-5-phosphate isomerase from Methanocaldococcus jannaschii (MJ1603).</title>
        <authorList>
            <person name="Strange R.W."/>
            <person name="Antonyuk S.V."/>
            <person name="Ellis M.J."/>
            <person name="Bessho Y."/>
            <person name="Kuramitsu S."/>
            <person name="Yokoyama S."/>
            <person name="Hasnain S.S."/>
        </authorList>
    </citation>
    <scope>X-RAY CRYSTALLOGRAPHY (1.78 ANGSTROMS) IN COMPLEX WITH SUBSTRATE ANALOGS</scope>
    <scope>ACTIVE SITE</scope>
    <scope>SUBUNIT</scope>
</reference>
<protein>
    <recommendedName>
        <fullName evidence="1">Ribose-5-phosphate isomerase A</fullName>
        <ecNumber evidence="1">5.3.1.6</ecNumber>
    </recommendedName>
    <alternativeName>
        <fullName evidence="1">Phosphoriboisomerase A</fullName>
        <shortName evidence="1">PRI</shortName>
    </alternativeName>
</protein>
<dbReference type="EC" id="5.3.1.6" evidence="1"/>
<dbReference type="EMBL" id="L77117">
    <property type="protein sequence ID" value="AAB99623.1"/>
    <property type="molecule type" value="Genomic_DNA"/>
</dbReference>
<dbReference type="PIR" id="B64500">
    <property type="entry name" value="B64500"/>
</dbReference>
<dbReference type="RefSeq" id="WP_010871128.1">
    <property type="nucleotide sequence ID" value="NC_000909.1"/>
</dbReference>
<dbReference type="PDB" id="3IXQ">
    <property type="method" value="X-ray"/>
    <property type="resolution" value="1.78 A"/>
    <property type="chains" value="A/B/C/D=1-226"/>
</dbReference>
<dbReference type="PDBsum" id="3IXQ"/>
<dbReference type="SMR" id="Q58998"/>
<dbReference type="FunCoup" id="Q58998">
    <property type="interactions" value="306"/>
</dbReference>
<dbReference type="STRING" id="243232.MJ_1603"/>
<dbReference type="PaxDb" id="243232-MJ_1603"/>
<dbReference type="EnsemblBacteria" id="AAB99623">
    <property type="protein sequence ID" value="AAB99623"/>
    <property type="gene ID" value="MJ_1603"/>
</dbReference>
<dbReference type="GeneID" id="1452512"/>
<dbReference type="KEGG" id="mja:MJ_1603"/>
<dbReference type="eggNOG" id="arCOG01122">
    <property type="taxonomic scope" value="Archaea"/>
</dbReference>
<dbReference type="HOGENOM" id="CLU_056590_1_1_2"/>
<dbReference type="InParanoid" id="Q58998"/>
<dbReference type="OrthoDB" id="19013at2157"/>
<dbReference type="PhylomeDB" id="Q58998"/>
<dbReference type="BRENDA" id="5.3.1.6">
    <property type="organism ID" value="3260"/>
</dbReference>
<dbReference type="UniPathway" id="UPA00293"/>
<dbReference type="EvolutionaryTrace" id="Q58998"/>
<dbReference type="Proteomes" id="UP000000805">
    <property type="component" value="Chromosome"/>
</dbReference>
<dbReference type="GO" id="GO:0005829">
    <property type="term" value="C:cytosol"/>
    <property type="evidence" value="ECO:0000318"/>
    <property type="project" value="GO_Central"/>
</dbReference>
<dbReference type="GO" id="GO:0004751">
    <property type="term" value="F:ribose-5-phosphate isomerase activity"/>
    <property type="evidence" value="ECO:0000318"/>
    <property type="project" value="GO_Central"/>
</dbReference>
<dbReference type="GO" id="GO:0006014">
    <property type="term" value="P:D-ribose metabolic process"/>
    <property type="evidence" value="ECO:0000318"/>
    <property type="project" value="GO_Central"/>
</dbReference>
<dbReference type="GO" id="GO:0009052">
    <property type="term" value="P:pentose-phosphate shunt, non-oxidative branch"/>
    <property type="evidence" value="ECO:0000314"/>
    <property type="project" value="UniProtKB"/>
</dbReference>
<dbReference type="CDD" id="cd01398">
    <property type="entry name" value="RPI_A"/>
    <property type="match status" value="1"/>
</dbReference>
<dbReference type="FunFam" id="3.30.70.260:FF:000018">
    <property type="entry name" value="Ribose-5-phosphate isomerase A"/>
    <property type="match status" value="1"/>
</dbReference>
<dbReference type="FunFam" id="3.40.50.1360:FF:000001">
    <property type="entry name" value="Ribose-5-phosphate isomerase A"/>
    <property type="match status" value="1"/>
</dbReference>
<dbReference type="Gene3D" id="3.30.70.260">
    <property type="match status" value="1"/>
</dbReference>
<dbReference type="Gene3D" id="3.40.50.1360">
    <property type="match status" value="1"/>
</dbReference>
<dbReference type="HAMAP" id="MF_00170">
    <property type="entry name" value="Rib_5P_isom_A"/>
    <property type="match status" value="1"/>
</dbReference>
<dbReference type="InterPro" id="IPR037171">
    <property type="entry name" value="NagB/RpiA_transferase-like"/>
</dbReference>
<dbReference type="InterPro" id="IPR020672">
    <property type="entry name" value="Ribose5P_isomerase_typA_subgr"/>
</dbReference>
<dbReference type="InterPro" id="IPR004788">
    <property type="entry name" value="Ribose5P_isomerase_type_A"/>
</dbReference>
<dbReference type="NCBIfam" id="NF001924">
    <property type="entry name" value="PRK00702.1"/>
    <property type="match status" value="1"/>
</dbReference>
<dbReference type="NCBIfam" id="TIGR00021">
    <property type="entry name" value="rpiA"/>
    <property type="match status" value="1"/>
</dbReference>
<dbReference type="PANTHER" id="PTHR11934">
    <property type="entry name" value="RIBOSE-5-PHOSPHATE ISOMERASE"/>
    <property type="match status" value="1"/>
</dbReference>
<dbReference type="PANTHER" id="PTHR11934:SF0">
    <property type="entry name" value="RIBOSE-5-PHOSPHATE ISOMERASE"/>
    <property type="match status" value="1"/>
</dbReference>
<dbReference type="Pfam" id="PF06026">
    <property type="entry name" value="Rib_5-P_isom_A"/>
    <property type="match status" value="1"/>
</dbReference>
<dbReference type="SMART" id="SM01134">
    <property type="entry name" value="DeoRC"/>
    <property type="match status" value="1"/>
</dbReference>
<dbReference type="SUPFAM" id="SSF75445">
    <property type="entry name" value="D-ribose-5-phosphate isomerase (RpiA), lid domain"/>
    <property type="match status" value="1"/>
</dbReference>
<dbReference type="SUPFAM" id="SSF100950">
    <property type="entry name" value="NagB/RpiA/CoA transferase-like"/>
    <property type="match status" value="1"/>
</dbReference>
<proteinExistence type="evidence at protein level"/>
<evidence type="ECO:0000255" key="1">
    <source>
        <dbReference type="HAMAP-Rule" id="MF_00170"/>
    </source>
</evidence>
<evidence type="ECO:0000269" key="2">
    <source>
    </source>
</evidence>
<evidence type="ECO:0000269" key="3">
    <source>
    </source>
</evidence>
<evidence type="ECO:0000305" key="4"/>
<evidence type="ECO:0000305" key="5">
    <source>
    </source>
</evidence>
<evidence type="ECO:0007829" key="6">
    <source>
        <dbReference type="PDB" id="3IXQ"/>
    </source>
</evidence>
<organism>
    <name type="scientific">Methanocaldococcus jannaschii (strain ATCC 43067 / DSM 2661 / JAL-1 / JCM 10045 / NBRC 100440)</name>
    <name type="common">Methanococcus jannaschii</name>
    <dbReference type="NCBI Taxonomy" id="243232"/>
    <lineage>
        <taxon>Archaea</taxon>
        <taxon>Methanobacteriati</taxon>
        <taxon>Methanobacteriota</taxon>
        <taxon>Methanomada group</taxon>
        <taxon>Methanococci</taxon>
        <taxon>Methanococcales</taxon>
        <taxon>Methanocaldococcaceae</taxon>
        <taxon>Methanocaldococcus</taxon>
    </lineage>
</organism>
<sequence>MSNEDLKLKVAKEAVKLVKDGMVIGLGTGSTAALFIRELGNRIREEELTVFGIPTSFEAKMLAMQYEIPLVTLDEYDVDIAFDGADEVEETTLFLIKGGGGCHTQEKIVDYNANEFVVLVDESKLVKKLGEKFPIPVEVIPSAYRVVIRALSEMGGEAVIRLGDRKRGPVITDNGNMIIDVFMNIDDAIELEKEINNIPGVVENGIFTKVDKVLVGTKKGVKTLKK</sequence>
<comment type="function">
    <text evidence="1">Catalyzes the reversible conversion of ribose-5-phosphate to ribulose 5-phosphate.</text>
</comment>
<comment type="catalytic activity">
    <reaction evidence="1">
        <text>aldehydo-D-ribose 5-phosphate = D-ribulose 5-phosphate</text>
        <dbReference type="Rhea" id="RHEA:14657"/>
        <dbReference type="ChEBI" id="CHEBI:58121"/>
        <dbReference type="ChEBI" id="CHEBI:58273"/>
        <dbReference type="EC" id="5.3.1.6"/>
    </reaction>
</comment>
<comment type="pathway">
    <text evidence="2">Carbohydrate biosynthesis; D-ribose 5-phosphate biosynthesis.</text>
</comment>
<comment type="subunit">
    <text evidence="3">Homotetramer.</text>
</comment>
<comment type="similarity">
    <text evidence="1">Belongs to the ribose 5-phosphate isomerase family.</text>
</comment>
<keyword id="KW-0002">3D-structure</keyword>
<keyword id="KW-0119">Carbohydrate metabolism</keyword>
<keyword id="KW-0413">Isomerase</keyword>
<keyword id="KW-1185">Reference proteome</keyword>
<accession>Q58998</accession>
<feature type="chain" id="PRO_0000158510" description="Ribose-5-phosphate isomerase A">
    <location>
        <begin position="1"/>
        <end position="226"/>
    </location>
</feature>
<feature type="active site" description="Proton acceptor" evidence="5">
    <location>
        <position position="106"/>
    </location>
</feature>
<feature type="binding site">
    <location>
        <begin position="28"/>
        <end position="31"/>
    </location>
    <ligand>
        <name>substrate</name>
    </ligand>
</feature>
<feature type="binding site" evidence="4">
    <location>
        <begin position="83"/>
        <end position="86"/>
    </location>
    <ligand>
        <name>substrate</name>
    </ligand>
</feature>
<feature type="binding site" evidence="4">
    <location>
        <begin position="97"/>
        <end position="100"/>
    </location>
    <ligand>
        <name>substrate</name>
    </ligand>
</feature>
<feature type="binding site" evidence="1">
    <location>
        <position position="124"/>
    </location>
    <ligand>
        <name>substrate</name>
    </ligand>
</feature>
<feature type="helix" evidence="6">
    <location>
        <begin position="4"/>
        <end position="14"/>
    </location>
</feature>
<feature type="helix" evidence="6">
    <location>
        <begin position="15"/>
        <end position="17"/>
    </location>
</feature>
<feature type="strand" evidence="6">
    <location>
        <begin position="23"/>
        <end position="26"/>
    </location>
</feature>
<feature type="helix" evidence="6">
    <location>
        <begin position="30"/>
        <end position="46"/>
    </location>
</feature>
<feature type="strand" evidence="6">
    <location>
        <begin position="51"/>
        <end position="56"/>
    </location>
</feature>
<feature type="helix" evidence="6">
    <location>
        <begin position="57"/>
        <end position="65"/>
    </location>
</feature>
<feature type="turn" evidence="6">
    <location>
        <begin position="73"/>
        <end position="75"/>
    </location>
</feature>
<feature type="strand" evidence="6">
    <location>
        <begin position="79"/>
        <end position="83"/>
    </location>
</feature>
<feature type="strand" evidence="6">
    <location>
        <begin position="86"/>
        <end position="89"/>
    </location>
</feature>
<feature type="turn" evidence="6">
    <location>
        <begin position="90"/>
        <end position="92"/>
    </location>
</feature>
<feature type="helix" evidence="6">
    <location>
        <begin position="103"/>
        <end position="112"/>
    </location>
</feature>
<feature type="strand" evidence="6">
    <location>
        <begin position="113"/>
        <end position="121"/>
    </location>
</feature>
<feature type="helix" evidence="6">
    <location>
        <begin position="122"/>
        <end position="124"/>
    </location>
</feature>
<feature type="strand" evidence="6">
    <location>
        <begin position="125"/>
        <end position="128"/>
    </location>
</feature>
<feature type="strand" evidence="6">
    <location>
        <begin position="131"/>
        <end position="133"/>
    </location>
</feature>
<feature type="strand" evidence="6">
    <location>
        <begin position="135"/>
        <end position="139"/>
    </location>
</feature>
<feature type="helix" evidence="6">
    <location>
        <begin position="141"/>
        <end position="143"/>
    </location>
</feature>
<feature type="helix" evidence="6">
    <location>
        <begin position="144"/>
        <end position="153"/>
    </location>
</feature>
<feature type="strand" evidence="6">
    <location>
        <begin position="157"/>
        <end position="160"/>
    </location>
</feature>
<feature type="strand" evidence="6">
    <location>
        <begin position="164"/>
        <end position="169"/>
    </location>
</feature>
<feature type="strand" evidence="6">
    <location>
        <begin position="177"/>
        <end position="182"/>
    </location>
</feature>
<feature type="helix" evidence="6">
    <location>
        <begin position="188"/>
        <end position="196"/>
    </location>
</feature>
<feature type="strand" evidence="6">
    <location>
        <begin position="201"/>
        <end position="207"/>
    </location>
</feature>
<feature type="strand" evidence="6">
    <location>
        <begin position="211"/>
        <end position="217"/>
    </location>
</feature>
<feature type="strand" evidence="6">
    <location>
        <begin position="220"/>
        <end position="224"/>
    </location>
</feature>
<name>RPIA_METJA</name>